<name>RS11_DICNV</name>
<sequence length="132" mass="13925">MAKAAGKQKNVRKKAKRVVVDAVAHVHASFNNTIVTITDGQGNTLSWATAGGSGFRGSRKSTPFAAQIAAERAGEVAKEYGVQNLDVNIKGPGPGRESAIRALNSAGFNIHSITDVTPIPHNGCRPPKKRRV</sequence>
<proteinExistence type="inferred from homology"/>
<accession>A5EX96</accession>
<organism>
    <name type="scientific">Dichelobacter nodosus (strain VCS1703A)</name>
    <dbReference type="NCBI Taxonomy" id="246195"/>
    <lineage>
        <taxon>Bacteria</taxon>
        <taxon>Pseudomonadati</taxon>
        <taxon>Pseudomonadota</taxon>
        <taxon>Gammaproteobacteria</taxon>
        <taxon>Cardiobacteriales</taxon>
        <taxon>Cardiobacteriaceae</taxon>
        <taxon>Dichelobacter</taxon>
    </lineage>
</organism>
<gene>
    <name evidence="1" type="primary">rpsK</name>
    <name type="ordered locus">DNO_1253</name>
</gene>
<protein>
    <recommendedName>
        <fullName evidence="1">Small ribosomal subunit protein uS11</fullName>
    </recommendedName>
    <alternativeName>
        <fullName evidence="2">30S ribosomal protein S11</fullName>
    </alternativeName>
</protein>
<feature type="chain" id="PRO_1000051833" description="Small ribosomal subunit protein uS11">
    <location>
        <begin position="1"/>
        <end position="132"/>
    </location>
</feature>
<evidence type="ECO:0000255" key="1">
    <source>
        <dbReference type="HAMAP-Rule" id="MF_01310"/>
    </source>
</evidence>
<evidence type="ECO:0000305" key="2"/>
<dbReference type="EMBL" id="CP000513">
    <property type="protein sequence ID" value="ABQ13718.1"/>
    <property type="molecule type" value="Genomic_DNA"/>
</dbReference>
<dbReference type="RefSeq" id="WP_012031548.1">
    <property type="nucleotide sequence ID" value="NC_009446.1"/>
</dbReference>
<dbReference type="SMR" id="A5EX96"/>
<dbReference type="STRING" id="246195.DNO_1253"/>
<dbReference type="KEGG" id="dno:DNO_1253"/>
<dbReference type="eggNOG" id="COG0100">
    <property type="taxonomic scope" value="Bacteria"/>
</dbReference>
<dbReference type="HOGENOM" id="CLU_072439_5_0_6"/>
<dbReference type="OrthoDB" id="9806415at2"/>
<dbReference type="Proteomes" id="UP000000248">
    <property type="component" value="Chromosome"/>
</dbReference>
<dbReference type="GO" id="GO:1990904">
    <property type="term" value="C:ribonucleoprotein complex"/>
    <property type="evidence" value="ECO:0007669"/>
    <property type="project" value="UniProtKB-KW"/>
</dbReference>
<dbReference type="GO" id="GO:0005840">
    <property type="term" value="C:ribosome"/>
    <property type="evidence" value="ECO:0007669"/>
    <property type="project" value="UniProtKB-KW"/>
</dbReference>
<dbReference type="GO" id="GO:0019843">
    <property type="term" value="F:rRNA binding"/>
    <property type="evidence" value="ECO:0007669"/>
    <property type="project" value="UniProtKB-UniRule"/>
</dbReference>
<dbReference type="GO" id="GO:0003735">
    <property type="term" value="F:structural constituent of ribosome"/>
    <property type="evidence" value="ECO:0007669"/>
    <property type="project" value="InterPro"/>
</dbReference>
<dbReference type="GO" id="GO:0006412">
    <property type="term" value="P:translation"/>
    <property type="evidence" value="ECO:0007669"/>
    <property type="project" value="UniProtKB-UniRule"/>
</dbReference>
<dbReference type="FunFam" id="3.30.420.80:FF:000001">
    <property type="entry name" value="30S ribosomal protein S11"/>
    <property type="match status" value="1"/>
</dbReference>
<dbReference type="Gene3D" id="3.30.420.80">
    <property type="entry name" value="Ribosomal protein S11"/>
    <property type="match status" value="1"/>
</dbReference>
<dbReference type="HAMAP" id="MF_01310">
    <property type="entry name" value="Ribosomal_uS11"/>
    <property type="match status" value="1"/>
</dbReference>
<dbReference type="InterPro" id="IPR001971">
    <property type="entry name" value="Ribosomal_uS11"/>
</dbReference>
<dbReference type="InterPro" id="IPR019981">
    <property type="entry name" value="Ribosomal_uS11_bac-type"/>
</dbReference>
<dbReference type="InterPro" id="IPR018102">
    <property type="entry name" value="Ribosomal_uS11_CS"/>
</dbReference>
<dbReference type="InterPro" id="IPR036967">
    <property type="entry name" value="Ribosomal_uS11_sf"/>
</dbReference>
<dbReference type="NCBIfam" id="NF003698">
    <property type="entry name" value="PRK05309.1"/>
    <property type="match status" value="1"/>
</dbReference>
<dbReference type="NCBIfam" id="TIGR03632">
    <property type="entry name" value="uS11_bact"/>
    <property type="match status" value="1"/>
</dbReference>
<dbReference type="PANTHER" id="PTHR11759">
    <property type="entry name" value="40S RIBOSOMAL PROTEIN S14/30S RIBOSOMAL PROTEIN S11"/>
    <property type="match status" value="1"/>
</dbReference>
<dbReference type="Pfam" id="PF00411">
    <property type="entry name" value="Ribosomal_S11"/>
    <property type="match status" value="1"/>
</dbReference>
<dbReference type="PIRSF" id="PIRSF002131">
    <property type="entry name" value="Ribosomal_S11"/>
    <property type="match status" value="1"/>
</dbReference>
<dbReference type="SUPFAM" id="SSF53137">
    <property type="entry name" value="Translational machinery components"/>
    <property type="match status" value="1"/>
</dbReference>
<dbReference type="PROSITE" id="PS00054">
    <property type="entry name" value="RIBOSOMAL_S11"/>
    <property type="match status" value="1"/>
</dbReference>
<reference key="1">
    <citation type="journal article" date="2007" name="Nat. Biotechnol.">
        <title>Genome sequence and identification of candidate vaccine antigens from the animal pathogen Dichelobacter nodosus.</title>
        <authorList>
            <person name="Myers G.S.A."/>
            <person name="Parker D."/>
            <person name="Al-Hasani K."/>
            <person name="Kennan R.M."/>
            <person name="Seemann T."/>
            <person name="Ren Q."/>
            <person name="Badger J.H."/>
            <person name="Selengut J.D."/>
            <person name="Deboy R.T."/>
            <person name="Tettelin H."/>
            <person name="Boyce J.D."/>
            <person name="McCarl V.P."/>
            <person name="Han X."/>
            <person name="Nelson W.C."/>
            <person name="Madupu R."/>
            <person name="Mohamoud Y."/>
            <person name="Holley T."/>
            <person name="Fedorova N."/>
            <person name="Khouri H."/>
            <person name="Bottomley S.P."/>
            <person name="Whittington R.J."/>
            <person name="Adler B."/>
            <person name="Songer J.G."/>
            <person name="Rood J.I."/>
            <person name="Paulsen I.T."/>
        </authorList>
    </citation>
    <scope>NUCLEOTIDE SEQUENCE [LARGE SCALE GENOMIC DNA]</scope>
    <source>
        <strain>VCS1703A</strain>
    </source>
</reference>
<keyword id="KW-1185">Reference proteome</keyword>
<keyword id="KW-0687">Ribonucleoprotein</keyword>
<keyword id="KW-0689">Ribosomal protein</keyword>
<keyword id="KW-0694">RNA-binding</keyword>
<keyword id="KW-0699">rRNA-binding</keyword>
<comment type="function">
    <text evidence="1">Located on the platform of the 30S subunit, it bridges several disparate RNA helices of the 16S rRNA. Forms part of the Shine-Dalgarno cleft in the 70S ribosome.</text>
</comment>
<comment type="subunit">
    <text evidence="1">Part of the 30S ribosomal subunit. Interacts with proteins S7 and S18. Binds to IF-3.</text>
</comment>
<comment type="similarity">
    <text evidence="1">Belongs to the universal ribosomal protein uS11 family.</text>
</comment>